<sequence length="275" mass="30052">MAIVKCKPTSPGRRHVVKVVNSDLHKGKPYAPLLEKKSKSGGRNNNGRITVRHIGGGNKQHYRLIDFKRTKDGIPAKVERLEYDPNRSANIALVLYADGERRYIIAPKGVSAGDMIQSGEDAAIKVGNTLPMRNIPVGSTVHCVELKPGKGAQLARSAGAYAQIIARTGTYVTLRLRSGEMRKVLSECRATLGEVGNSEHMLRELGKAGASRWRGIRPTVRGVVMNPVDHPHGGGEGRTSGGRHPVSPWGVPTKGYKTRSNKRTDKYIVRSRNKK</sequence>
<gene>
    <name evidence="1" type="primary">rplB</name>
    <name type="ordered locus">PBPRA0323</name>
</gene>
<keyword id="KW-1185">Reference proteome</keyword>
<keyword id="KW-0687">Ribonucleoprotein</keyword>
<keyword id="KW-0689">Ribosomal protein</keyword>
<keyword id="KW-0694">RNA-binding</keyword>
<keyword id="KW-0699">rRNA-binding</keyword>
<feature type="chain" id="PRO_0000237222" description="Large ribosomal subunit protein uL2">
    <location>
        <begin position="1"/>
        <end position="275"/>
    </location>
</feature>
<feature type="region of interest" description="Disordered" evidence="2">
    <location>
        <begin position="28"/>
        <end position="48"/>
    </location>
</feature>
<feature type="region of interest" description="Disordered" evidence="2">
    <location>
        <begin position="223"/>
        <end position="275"/>
    </location>
</feature>
<reference key="1">
    <citation type="journal article" date="2005" name="Science">
        <title>Life at depth: Photobacterium profundum genome sequence and expression analysis.</title>
        <authorList>
            <person name="Vezzi A."/>
            <person name="Campanaro S."/>
            <person name="D'Angelo M."/>
            <person name="Simonato F."/>
            <person name="Vitulo N."/>
            <person name="Lauro F.M."/>
            <person name="Cestaro A."/>
            <person name="Malacrida G."/>
            <person name="Simionati B."/>
            <person name="Cannata N."/>
            <person name="Romualdi C."/>
            <person name="Bartlett D.H."/>
            <person name="Valle G."/>
        </authorList>
    </citation>
    <scope>NUCLEOTIDE SEQUENCE [LARGE SCALE GENOMIC DNA]</scope>
    <source>
        <strain>ATCC BAA-1253 / SS9</strain>
    </source>
</reference>
<dbReference type="EMBL" id="CR378663">
    <property type="protein sequence ID" value="CAG18762.1"/>
    <property type="molecule type" value="Genomic_DNA"/>
</dbReference>
<dbReference type="RefSeq" id="WP_011217130.1">
    <property type="nucleotide sequence ID" value="NC_006370.1"/>
</dbReference>
<dbReference type="SMR" id="Q6LVB3"/>
<dbReference type="STRING" id="298386.PBPRA0323"/>
<dbReference type="KEGG" id="ppr:PBPRA0323"/>
<dbReference type="eggNOG" id="COG0090">
    <property type="taxonomic scope" value="Bacteria"/>
</dbReference>
<dbReference type="HOGENOM" id="CLU_036235_2_1_6"/>
<dbReference type="Proteomes" id="UP000000593">
    <property type="component" value="Chromosome 1"/>
</dbReference>
<dbReference type="GO" id="GO:0015934">
    <property type="term" value="C:large ribosomal subunit"/>
    <property type="evidence" value="ECO:0007669"/>
    <property type="project" value="InterPro"/>
</dbReference>
<dbReference type="GO" id="GO:0019843">
    <property type="term" value="F:rRNA binding"/>
    <property type="evidence" value="ECO:0007669"/>
    <property type="project" value="UniProtKB-UniRule"/>
</dbReference>
<dbReference type="GO" id="GO:0003735">
    <property type="term" value="F:structural constituent of ribosome"/>
    <property type="evidence" value="ECO:0007669"/>
    <property type="project" value="InterPro"/>
</dbReference>
<dbReference type="GO" id="GO:0016740">
    <property type="term" value="F:transferase activity"/>
    <property type="evidence" value="ECO:0007669"/>
    <property type="project" value="InterPro"/>
</dbReference>
<dbReference type="GO" id="GO:0002181">
    <property type="term" value="P:cytoplasmic translation"/>
    <property type="evidence" value="ECO:0007669"/>
    <property type="project" value="TreeGrafter"/>
</dbReference>
<dbReference type="FunFam" id="2.30.30.30:FF:000001">
    <property type="entry name" value="50S ribosomal protein L2"/>
    <property type="match status" value="1"/>
</dbReference>
<dbReference type="FunFam" id="2.40.50.140:FF:000003">
    <property type="entry name" value="50S ribosomal protein L2"/>
    <property type="match status" value="1"/>
</dbReference>
<dbReference type="FunFam" id="4.10.950.10:FF:000001">
    <property type="entry name" value="50S ribosomal protein L2"/>
    <property type="match status" value="1"/>
</dbReference>
<dbReference type="Gene3D" id="2.30.30.30">
    <property type="match status" value="1"/>
</dbReference>
<dbReference type="Gene3D" id="2.40.50.140">
    <property type="entry name" value="Nucleic acid-binding proteins"/>
    <property type="match status" value="1"/>
</dbReference>
<dbReference type="Gene3D" id="4.10.950.10">
    <property type="entry name" value="Ribosomal protein L2, domain 3"/>
    <property type="match status" value="1"/>
</dbReference>
<dbReference type="HAMAP" id="MF_01320_B">
    <property type="entry name" value="Ribosomal_uL2_B"/>
    <property type="match status" value="1"/>
</dbReference>
<dbReference type="InterPro" id="IPR012340">
    <property type="entry name" value="NA-bd_OB-fold"/>
</dbReference>
<dbReference type="InterPro" id="IPR014722">
    <property type="entry name" value="Rib_uL2_dom2"/>
</dbReference>
<dbReference type="InterPro" id="IPR002171">
    <property type="entry name" value="Ribosomal_uL2"/>
</dbReference>
<dbReference type="InterPro" id="IPR005880">
    <property type="entry name" value="Ribosomal_uL2_bac/org-type"/>
</dbReference>
<dbReference type="InterPro" id="IPR022669">
    <property type="entry name" value="Ribosomal_uL2_C"/>
</dbReference>
<dbReference type="InterPro" id="IPR022671">
    <property type="entry name" value="Ribosomal_uL2_CS"/>
</dbReference>
<dbReference type="InterPro" id="IPR014726">
    <property type="entry name" value="Ribosomal_uL2_dom3"/>
</dbReference>
<dbReference type="InterPro" id="IPR022666">
    <property type="entry name" value="Ribosomal_uL2_RNA-bd_dom"/>
</dbReference>
<dbReference type="InterPro" id="IPR008991">
    <property type="entry name" value="Translation_prot_SH3-like_sf"/>
</dbReference>
<dbReference type="NCBIfam" id="TIGR01171">
    <property type="entry name" value="rplB_bact"/>
    <property type="match status" value="1"/>
</dbReference>
<dbReference type="PANTHER" id="PTHR13691:SF5">
    <property type="entry name" value="LARGE RIBOSOMAL SUBUNIT PROTEIN UL2M"/>
    <property type="match status" value="1"/>
</dbReference>
<dbReference type="PANTHER" id="PTHR13691">
    <property type="entry name" value="RIBOSOMAL PROTEIN L2"/>
    <property type="match status" value="1"/>
</dbReference>
<dbReference type="Pfam" id="PF00181">
    <property type="entry name" value="Ribosomal_L2"/>
    <property type="match status" value="1"/>
</dbReference>
<dbReference type="Pfam" id="PF03947">
    <property type="entry name" value="Ribosomal_L2_C"/>
    <property type="match status" value="1"/>
</dbReference>
<dbReference type="PIRSF" id="PIRSF002158">
    <property type="entry name" value="Ribosomal_L2"/>
    <property type="match status" value="1"/>
</dbReference>
<dbReference type="SMART" id="SM01383">
    <property type="entry name" value="Ribosomal_L2"/>
    <property type="match status" value="1"/>
</dbReference>
<dbReference type="SMART" id="SM01382">
    <property type="entry name" value="Ribosomal_L2_C"/>
    <property type="match status" value="1"/>
</dbReference>
<dbReference type="SUPFAM" id="SSF50249">
    <property type="entry name" value="Nucleic acid-binding proteins"/>
    <property type="match status" value="1"/>
</dbReference>
<dbReference type="SUPFAM" id="SSF50104">
    <property type="entry name" value="Translation proteins SH3-like domain"/>
    <property type="match status" value="1"/>
</dbReference>
<dbReference type="PROSITE" id="PS00467">
    <property type="entry name" value="RIBOSOMAL_L2"/>
    <property type="match status" value="1"/>
</dbReference>
<organism>
    <name type="scientific">Photobacterium profundum (strain SS9)</name>
    <dbReference type="NCBI Taxonomy" id="298386"/>
    <lineage>
        <taxon>Bacteria</taxon>
        <taxon>Pseudomonadati</taxon>
        <taxon>Pseudomonadota</taxon>
        <taxon>Gammaproteobacteria</taxon>
        <taxon>Vibrionales</taxon>
        <taxon>Vibrionaceae</taxon>
        <taxon>Photobacterium</taxon>
    </lineage>
</organism>
<name>RL2_PHOPR</name>
<protein>
    <recommendedName>
        <fullName evidence="1">Large ribosomal subunit protein uL2</fullName>
    </recommendedName>
    <alternativeName>
        <fullName evidence="3">50S ribosomal protein L2</fullName>
    </alternativeName>
</protein>
<comment type="function">
    <text evidence="1">One of the primary rRNA binding proteins. Required for association of the 30S and 50S subunits to form the 70S ribosome, for tRNA binding and peptide bond formation. It has been suggested to have peptidyltransferase activity; this is somewhat controversial. Makes several contacts with the 16S rRNA in the 70S ribosome.</text>
</comment>
<comment type="subunit">
    <text evidence="1">Part of the 50S ribosomal subunit. Forms a bridge to the 30S subunit in the 70S ribosome.</text>
</comment>
<comment type="similarity">
    <text evidence="1">Belongs to the universal ribosomal protein uL2 family.</text>
</comment>
<proteinExistence type="inferred from homology"/>
<accession>Q6LVB3</accession>
<evidence type="ECO:0000255" key="1">
    <source>
        <dbReference type="HAMAP-Rule" id="MF_01320"/>
    </source>
</evidence>
<evidence type="ECO:0000256" key="2">
    <source>
        <dbReference type="SAM" id="MobiDB-lite"/>
    </source>
</evidence>
<evidence type="ECO:0000305" key="3"/>